<comment type="function">
    <text evidence="1">Catalyzes the acyloin condensation reaction between C atoms 2 and 3 of pyruvate and glyceraldehyde 3-phosphate to yield 1-deoxy-D-xylulose-5-phosphate (DXP).</text>
</comment>
<comment type="catalytic activity">
    <reaction evidence="1">
        <text>D-glyceraldehyde 3-phosphate + pyruvate + H(+) = 1-deoxy-D-xylulose 5-phosphate + CO2</text>
        <dbReference type="Rhea" id="RHEA:12605"/>
        <dbReference type="ChEBI" id="CHEBI:15361"/>
        <dbReference type="ChEBI" id="CHEBI:15378"/>
        <dbReference type="ChEBI" id="CHEBI:16526"/>
        <dbReference type="ChEBI" id="CHEBI:57792"/>
        <dbReference type="ChEBI" id="CHEBI:59776"/>
        <dbReference type="EC" id="2.2.1.7"/>
    </reaction>
</comment>
<comment type="cofactor">
    <cofactor evidence="1">
        <name>Mg(2+)</name>
        <dbReference type="ChEBI" id="CHEBI:18420"/>
    </cofactor>
    <text evidence="1">Binds 1 Mg(2+) ion per subunit.</text>
</comment>
<comment type="cofactor">
    <cofactor evidence="1">
        <name>thiamine diphosphate</name>
        <dbReference type="ChEBI" id="CHEBI:58937"/>
    </cofactor>
    <text evidence="1">Binds 1 thiamine pyrophosphate per subunit.</text>
</comment>
<comment type="pathway">
    <text evidence="1">Metabolic intermediate biosynthesis; 1-deoxy-D-xylulose 5-phosphate biosynthesis; 1-deoxy-D-xylulose 5-phosphate from D-glyceraldehyde 3-phosphate and pyruvate: step 1/1.</text>
</comment>
<comment type="subunit">
    <text evidence="1">Homodimer.</text>
</comment>
<comment type="similarity">
    <text evidence="1">Belongs to the transketolase family. DXPS subfamily.</text>
</comment>
<comment type="sequence caution" evidence="2">
    <conflict type="erroneous initiation">
        <sequence resource="EMBL-CDS" id="AAW60035"/>
    </conflict>
</comment>
<proteinExistence type="inferred from homology"/>
<feature type="chain" id="PRO_0000256426" description="1-deoxy-D-xylulose-5-phosphate synthase">
    <location>
        <begin position="1"/>
        <end position="660"/>
    </location>
</feature>
<feature type="binding site" evidence="1">
    <location>
        <position position="86"/>
    </location>
    <ligand>
        <name>thiamine diphosphate</name>
        <dbReference type="ChEBI" id="CHEBI:58937"/>
    </ligand>
</feature>
<feature type="binding site" evidence="1">
    <location>
        <begin position="127"/>
        <end position="129"/>
    </location>
    <ligand>
        <name>thiamine diphosphate</name>
        <dbReference type="ChEBI" id="CHEBI:58937"/>
    </ligand>
</feature>
<feature type="binding site" evidence="1">
    <location>
        <position position="164"/>
    </location>
    <ligand>
        <name>Mg(2+)</name>
        <dbReference type="ChEBI" id="CHEBI:18420"/>
    </ligand>
</feature>
<feature type="binding site" evidence="1">
    <location>
        <begin position="165"/>
        <end position="166"/>
    </location>
    <ligand>
        <name>thiamine diphosphate</name>
        <dbReference type="ChEBI" id="CHEBI:58937"/>
    </ligand>
</feature>
<feature type="binding site" evidence="1">
    <location>
        <position position="196"/>
    </location>
    <ligand>
        <name>Mg(2+)</name>
        <dbReference type="ChEBI" id="CHEBI:18420"/>
    </ligand>
</feature>
<feature type="binding site" evidence="1">
    <location>
        <position position="196"/>
    </location>
    <ligand>
        <name>thiamine diphosphate</name>
        <dbReference type="ChEBI" id="CHEBI:58937"/>
    </ligand>
</feature>
<feature type="binding site" evidence="1">
    <location>
        <position position="306"/>
    </location>
    <ligand>
        <name>thiamine diphosphate</name>
        <dbReference type="ChEBI" id="CHEBI:58937"/>
    </ligand>
</feature>
<feature type="binding site" evidence="1">
    <location>
        <position position="388"/>
    </location>
    <ligand>
        <name>thiamine diphosphate</name>
        <dbReference type="ChEBI" id="CHEBI:58937"/>
    </ligand>
</feature>
<gene>
    <name evidence="1" type="primary">dxs</name>
    <name type="ordered locus">GOX0252</name>
</gene>
<keyword id="KW-0414">Isoprene biosynthesis</keyword>
<keyword id="KW-0460">Magnesium</keyword>
<keyword id="KW-0479">Metal-binding</keyword>
<keyword id="KW-1185">Reference proteome</keyword>
<keyword id="KW-0784">Thiamine biosynthesis</keyword>
<keyword id="KW-0786">Thiamine pyrophosphate</keyword>
<keyword id="KW-0808">Transferase</keyword>
<accession>Q5FUB1</accession>
<organism>
    <name type="scientific">Gluconobacter oxydans (strain 621H)</name>
    <name type="common">Gluconobacter suboxydans</name>
    <dbReference type="NCBI Taxonomy" id="290633"/>
    <lineage>
        <taxon>Bacteria</taxon>
        <taxon>Pseudomonadati</taxon>
        <taxon>Pseudomonadota</taxon>
        <taxon>Alphaproteobacteria</taxon>
        <taxon>Acetobacterales</taxon>
        <taxon>Acetobacteraceae</taxon>
        <taxon>Gluconobacter</taxon>
    </lineage>
</organism>
<name>DXS_GLUOX</name>
<dbReference type="EC" id="2.2.1.7" evidence="1"/>
<dbReference type="EMBL" id="CP000009">
    <property type="protein sequence ID" value="AAW60035.1"/>
    <property type="status" value="ALT_INIT"/>
    <property type="molecule type" value="Genomic_DNA"/>
</dbReference>
<dbReference type="RefSeq" id="WP_024717207.1">
    <property type="nucleotide sequence ID" value="NC_006677.1"/>
</dbReference>
<dbReference type="SMR" id="Q5FUB1"/>
<dbReference type="STRING" id="290633.GOX0252"/>
<dbReference type="KEGG" id="gox:GOX0252"/>
<dbReference type="eggNOG" id="COG1154">
    <property type="taxonomic scope" value="Bacteria"/>
</dbReference>
<dbReference type="HOGENOM" id="CLU_009227_1_4_5"/>
<dbReference type="UniPathway" id="UPA00064">
    <property type="reaction ID" value="UER00091"/>
</dbReference>
<dbReference type="Proteomes" id="UP000006375">
    <property type="component" value="Chromosome"/>
</dbReference>
<dbReference type="GO" id="GO:0008661">
    <property type="term" value="F:1-deoxy-D-xylulose-5-phosphate synthase activity"/>
    <property type="evidence" value="ECO:0007669"/>
    <property type="project" value="UniProtKB-UniRule"/>
</dbReference>
<dbReference type="GO" id="GO:0000287">
    <property type="term" value="F:magnesium ion binding"/>
    <property type="evidence" value="ECO:0007669"/>
    <property type="project" value="UniProtKB-UniRule"/>
</dbReference>
<dbReference type="GO" id="GO:0030976">
    <property type="term" value="F:thiamine pyrophosphate binding"/>
    <property type="evidence" value="ECO:0007669"/>
    <property type="project" value="UniProtKB-UniRule"/>
</dbReference>
<dbReference type="GO" id="GO:0052865">
    <property type="term" value="P:1-deoxy-D-xylulose 5-phosphate biosynthetic process"/>
    <property type="evidence" value="ECO:0007669"/>
    <property type="project" value="UniProtKB-UniPathway"/>
</dbReference>
<dbReference type="GO" id="GO:0019682">
    <property type="term" value="P:glyceraldehyde-3-phosphate metabolic process"/>
    <property type="evidence" value="ECO:0007669"/>
    <property type="project" value="UniProtKB-ARBA"/>
</dbReference>
<dbReference type="GO" id="GO:0016114">
    <property type="term" value="P:terpenoid biosynthetic process"/>
    <property type="evidence" value="ECO:0007669"/>
    <property type="project" value="UniProtKB-UniRule"/>
</dbReference>
<dbReference type="GO" id="GO:0009228">
    <property type="term" value="P:thiamine biosynthetic process"/>
    <property type="evidence" value="ECO:0007669"/>
    <property type="project" value="UniProtKB-UniRule"/>
</dbReference>
<dbReference type="CDD" id="cd02007">
    <property type="entry name" value="TPP_DXS"/>
    <property type="match status" value="1"/>
</dbReference>
<dbReference type="CDD" id="cd07033">
    <property type="entry name" value="TPP_PYR_DXS_TK_like"/>
    <property type="match status" value="1"/>
</dbReference>
<dbReference type="FunFam" id="3.40.50.970:FF:000005">
    <property type="entry name" value="1-deoxy-D-xylulose-5-phosphate synthase"/>
    <property type="match status" value="1"/>
</dbReference>
<dbReference type="Gene3D" id="3.40.50.920">
    <property type="match status" value="1"/>
</dbReference>
<dbReference type="Gene3D" id="3.40.50.970">
    <property type="match status" value="2"/>
</dbReference>
<dbReference type="HAMAP" id="MF_00315">
    <property type="entry name" value="DXP_synth"/>
    <property type="match status" value="1"/>
</dbReference>
<dbReference type="InterPro" id="IPR005477">
    <property type="entry name" value="Dxylulose-5-P_synthase"/>
</dbReference>
<dbReference type="InterPro" id="IPR029061">
    <property type="entry name" value="THDP-binding"/>
</dbReference>
<dbReference type="InterPro" id="IPR009014">
    <property type="entry name" value="Transketo_C/PFOR_II"/>
</dbReference>
<dbReference type="InterPro" id="IPR005475">
    <property type="entry name" value="Transketolase-like_Pyr-bd"/>
</dbReference>
<dbReference type="InterPro" id="IPR033248">
    <property type="entry name" value="Transketolase_C"/>
</dbReference>
<dbReference type="InterPro" id="IPR049557">
    <property type="entry name" value="Transketolase_CS"/>
</dbReference>
<dbReference type="NCBIfam" id="TIGR00204">
    <property type="entry name" value="dxs"/>
    <property type="match status" value="1"/>
</dbReference>
<dbReference type="NCBIfam" id="NF003933">
    <property type="entry name" value="PRK05444.2-2"/>
    <property type="match status" value="1"/>
</dbReference>
<dbReference type="PANTHER" id="PTHR43322">
    <property type="entry name" value="1-D-DEOXYXYLULOSE 5-PHOSPHATE SYNTHASE-RELATED"/>
    <property type="match status" value="1"/>
</dbReference>
<dbReference type="PANTHER" id="PTHR43322:SF5">
    <property type="entry name" value="1-DEOXY-D-XYLULOSE-5-PHOSPHATE SYNTHASE, CHLOROPLASTIC"/>
    <property type="match status" value="1"/>
</dbReference>
<dbReference type="Pfam" id="PF13292">
    <property type="entry name" value="DXP_synthase_N"/>
    <property type="match status" value="1"/>
</dbReference>
<dbReference type="Pfam" id="PF02779">
    <property type="entry name" value="Transket_pyr"/>
    <property type="match status" value="1"/>
</dbReference>
<dbReference type="Pfam" id="PF02780">
    <property type="entry name" value="Transketolase_C"/>
    <property type="match status" value="1"/>
</dbReference>
<dbReference type="SMART" id="SM00861">
    <property type="entry name" value="Transket_pyr"/>
    <property type="match status" value="1"/>
</dbReference>
<dbReference type="SUPFAM" id="SSF52518">
    <property type="entry name" value="Thiamin diphosphate-binding fold (THDP-binding)"/>
    <property type="match status" value="2"/>
</dbReference>
<dbReference type="SUPFAM" id="SSF52922">
    <property type="entry name" value="TK C-terminal domain-like"/>
    <property type="match status" value="1"/>
</dbReference>
<dbReference type="PROSITE" id="PS00801">
    <property type="entry name" value="TRANSKETOLASE_1"/>
    <property type="match status" value="1"/>
</dbReference>
<protein>
    <recommendedName>
        <fullName evidence="1">1-deoxy-D-xylulose-5-phosphate synthase</fullName>
        <ecNumber evidence="1">2.2.1.7</ecNumber>
    </recommendedName>
    <alternativeName>
        <fullName evidence="1">1-deoxyxylulose-5-phosphate synthase</fullName>
        <shortName evidence="1">DXP synthase</shortName>
        <shortName evidence="1">DXPS</shortName>
    </alternativeName>
</protein>
<reference key="1">
    <citation type="journal article" date="2005" name="Nat. Biotechnol.">
        <title>Complete genome sequence of the acetic acid bacterium Gluconobacter oxydans.</title>
        <authorList>
            <person name="Prust C."/>
            <person name="Hoffmeister M."/>
            <person name="Liesegang H."/>
            <person name="Wiezer A."/>
            <person name="Fricke W.F."/>
            <person name="Ehrenreich A."/>
            <person name="Gottschalk G."/>
            <person name="Deppenmeier U."/>
        </authorList>
    </citation>
    <scope>NUCLEOTIDE SEQUENCE [LARGE SCALE GENOMIC DNA]</scope>
    <source>
        <strain>621H</strain>
    </source>
</reference>
<sequence>MSKKTSTIPTYGRYPELDRVRFPADMRNLSVDQLKQLADELRSETVDAVSTTGGHLGASLGVVELTVALHAVFNTPDDRIIWDVGHQAYPHKILTGRRDRIRTLRQPEGLSGFTRRAESEYDPFGAAHSSTSISAGLGMAVAHHLRAEEDPSYHERNVIAVIGDGSISAGMAYEAMNNAAVAGPGANRLIVVLNDNEMSIAPPVGSMSDYLSRLMSSRQFFSLRDLAGKVAKRLPGKIERTAKRAEEYARGMITGGTLFEELGFYYVGPVNGHDMSQLVPILRNLRDADDQGPILLHIITEKGRGYKPAEAAGDKYHAVSKFNVVTGEQKKAPAGPPSYTSIFSRELMRRAKTDDKLITITAAMPSGTGLNAFAKAYPDRFFDVGIAEQHAVTFAAGIASEGLRPFCAIYSTFLQRAYDQVVHDVALQNLPVRFAIDRAGLVGADGATHAGAFDLNYLCCLPNMVVMAPSDEVELLHATATACEYDAGPIAFRYPRGNGIGLDLPEKGEVLEIGKGRIVREARRAPNARGGVAILSLGPRMHESLRAADQLAAQGVPVTVADARFAKPIDKALVEDLARQHEVFITIEEGAIGGFSSLVVQHLAETGLLDKVKFRPMALPDRYIDHNTQDAQYEDAGLTAPHIVRTAADALGVEVAQQSA</sequence>
<evidence type="ECO:0000255" key="1">
    <source>
        <dbReference type="HAMAP-Rule" id="MF_00315"/>
    </source>
</evidence>
<evidence type="ECO:0000305" key="2"/>